<feature type="chain" id="PRO_1000101072" description="Large ribosomal subunit protein bL36">
    <location>
        <begin position="1"/>
        <end position="37"/>
    </location>
</feature>
<sequence>MKVKPSVKKICDKCKVIRRHGRVMVICDNLRHKQRQG</sequence>
<reference key="1">
    <citation type="journal article" date="2008" name="J. Bacteriol.">
        <title>Genome sequence of the streptomycin-producing microorganism Streptomyces griseus IFO 13350.</title>
        <authorList>
            <person name="Ohnishi Y."/>
            <person name="Ishikawa J."/>
            <person name="Hara H."/>
            <person name="Suzuki H."/>
            <person name="Ikenoya M."/>
            <person name="Ikeda H."/>
            <person name="Yamashita A."/>
            <person name="Hattori M."/>
            <person name="Horinouchi S."/>
        </authorList>
    </citation>
    <scope>NUCLEOTIDE SEQUENCE [LARGE SCALE GENOMIC DNA]</scope>
    <source>
        <strain>JCM 4626 / CBS 651.72 / NBRC 13350 / KCC S-0626 / ISP 5235</strain>
    </source>
</reference>
<dbReference type="EMBL" id="AP009493">
    <property type="protein sequence ID" value="BAG19639.1"/>
    <property type="molecule type" value="Genomic_DNA"/>
</dbReference>
<dbReference type="RefSeq" id="WP_003956441.1">
    <property type="nucleotide sequence ID" value="NC_010572.1"/>
</dbReference>
<dbReference type="SMR" id="B1W3Y3"/>
<dbReference type="GeneID" id="97760394"/>
<dbReference type="KEGG" id="sgr:SGR_2810"/>
<dbReference type="eggNOG" id="COG0257">
    <property type="taxonomic scope" value="Bacteria"/>
</dbReference>
<dbReference type="HOGENOM" id="CLU_135723_6_2_11"/>
<dbReference type="Proteomes" id="UP000001685">
    <property type="component" value="Chromosome"/>
</dbReference>
<dbReference type="GO" id="GO:0005737">
    <property type="term" value="C:cytoplasm"/>
    <property type="evidence" value="ECO:0007669"/>
    <property type="project" value="UniProtKB-ARBA"/>
</dbReference>
<dbReference type="GO" id="GO:1990904">
    <property type="term" value="C:ribonucleoprotein complex"/>
    <property type="evidence" value="ECO:0007669"/>
    <property type="project" value="UniProtKB-KW"/>
</dbReference>
<dbReference type="GO" id="GO:0005840">
    <property type="term" value="C:ribosome"/>
    <property type="evidence" value="ECO:0007669"/>
    <property type="project" value="UniProtKB-KW"/>
</dbReference>
<dbReference type="GO" id="GO:0003735">
    <property type="term" value="F:structural constituent of ribosome"/>
    <property type="evidence" value="ECO:0007669"/>
    <property type="project" value="InterPro"/>
</dbReference>
<dbReference type="GO" id="GO:0006412">
    <property type="term" value="P:translation"/>
    <property type="evidence" value="ECO:0007669"/>
    <property type="project" value="UniProtKB-UniRule"/>
</dbReference>
<dbReference type="HAMAP" id="MF_00251">
    <property type="entry name" value="Ribosomal_bL36"/>
    <property type="match status" value="1"/>
</dbReference>
<dbReference type="InterPro" id="IPR000473">
    <property type="entry name" value="Ribosomal_bL36"/>
</dbReference>
<dbReference type="InterPro" id="IPR035977">
    <property type="entry name" value="Ribosomal_bL36_sp"/>
</dbReference>
<dbReference type="NCBIfam" id="TIGR01022">
    <property type="entry name" value="rpmJ_bact"/>
    <property type="match status" value="1"/>
</dbReference>
<dbReference type="PANTHER" id="PTHR42888">
    <property type="entry name" value="50S RIBOSOMAL PROTEIN L36, CHLOROPLASTIC"/>
    <property type="match status" value="1"/>
</dbReference>
<dbReference type="PANTHER" id="PTHR42888:SF1">
    <property type="entry name" value="LARGE RIBOSOMAL SUBUNIT PROTEIN BL36C"/>
    <property type="match status" value="1"/>
</dbReference>
<dbReference type="Pfam" id="PF00444">
    <property type="entry name" value="Ribosomal_L36"/>
    <property type="match status" value="1"/>
</dbReference>
<dbReference type="SUPFAM" id="SSF57840">
    <property type="entry name" value="Ribosomal protein L36"/>
    <property type="match status" value="1"/>
</dbReference>
<dbReference type="PROSITE" id="PS00828">
    <property type="entry name" value="RIBOSOMAL_L36"/>
    <property type="match status" value="1"/>
</dbReference>
<name>RL36_STRGG</name>
<keyword id="KW-0687">Ribonucleoprotein</keyword>
<keyword id="KW-0689">Ribosomal protein</keyword>
<organism>
    <name type="scientific">Streptomyces griseus subsp. griseus (strain JCM 4626 / CBS 651.72 / NBRC 13350 / KCC S-0626 / ISP 5235)</name>
    <dbReference type="NCBI Taxonomy" id="455632"/>
    <lineage>
        <taxon>Bacteria</taxon>
        <taxon>Bacillati</taxon>
        <taxon>Actinomycetota</taxon>
        <taxon>Actinomycetes</taxon>
        <taxon>Kitasatosporales</taxon>
        <taxon>Streptomycetaceae</taxon>
        <taxon>Streptomyces</taxon>
    </lineage>
</organism>
<comment type="similarity">
    <text evidence="1">Belongs to the bacterial ribosomal protein bL36 family.</text>
</comment>
<accession>B1W3Y3</accession>
<evidence type="ECO:0000255" key="1">
    <source>
        <dbReference type="HAMAP-Rule" id="MF_00251"/>
    </source>
</evidence>
<evidence type="ECO:0000305" key="2"/>
<gene>
    <name evidence="1" type="primary">rpmJ</name>
    <name type="ordered locus">SGR_2810</name>
</gene>
<proteinExistence type="inferred from homology"/>
<protein>
    <recommendedName>
        <fullName evidence="1">Large ribosomal subunit protein bL36</fullName>
    </recommendedName>
    <alternativeName>
        <fullName evidence="2">50S ribosomal protein L36</fullName>
    </alternativeName>
</protein>